<organism>
    <name type="scientific">Campylobacter jejuni (strain RM1221)</name>
    <dbReference type="NCBI Taxonomy" id="195099"/>
    <lineage>
        <taxon>Bacteria</taxon>
        <taxon>Pseudomonadati</taxon>
        <taxon>Campylobacterota</taxon>
        <taxon>Epsilonproteobacteria</taxon>
        <taxon>Campylobacterales</taxon>
        <taxon>Campylobacteraceae</taxon>
        <taxon>Campylobacter</taxon>
    </lineage>
</organism>
<sequence>MKNLILAIESSCDDSSIAIIDKNTLECKFHKKISQELDHSIYGGVVPELAARLHSEALPKMLKQCKEHFKNLCAIAVTNEPGLSVSLLSGISMAKTLASALNLPLIPINHLKGHIYSLFLEEKISLDMGILLVSGGHTMVLYLKDDASLELLASTNDDSFGESFDKVAKMMNLGYPGGVIIENLAKNAKLKNISFNTPLKHSKELAFSFSGLKNAVRLEILKHENLNEDTKAEIAYAFENTACDHIMDKLEKIFNLYKFKNFGVVGGASANLNLRSRLQNLCQKYNANLKLAPLKFCSDNALMIARAAVDAYEKKEFVSVEEDILSPKNKNFSRI</sequence>
<feature type="chain" id="PRO_0000303311" description="tRNA N6-adenosine threonylcarbamoyltransferase">
    <location>
        <begin position="1"/>
        <end position="335"/>
    </location>
</feature>
<feature type="binding site" evidence="1">
    <location>
        <position position="110"/>
    </location>
    <ligand>
        <name>Fe cation</name>
        <dbReference type="ChEBI" id="CHEBI:24875"/>
    </ligand>
</feature>
<feature type="binding site" evidence="1">
    <location>
        <position position="114"/>
    </location>
    <ligand>
        <name>Fe cation</name>
        <dbReference type="ChEBI" id="CHEBI:24875"/>
    </ligand>
</feature>
<feature type="binding site" evidence="1">
    <location>
        <begin position="132"/>
        <end position="136"/>
    </location>
    <ligand>
        <name>substrate</name>
    </ligand>
</feature>
<feature type="binding site" evidence="1">
    <location>
        <position position="165"/>
    </location>
    <ligand>
        <name>substrate</name>
    </ligand>
</feature>
<feature type="binding site" evidence="1">
    <location>
        <position position="178"/>
    </location>
    <ligand>
        <name>substrate</name>
    </ligand>
</feature>
<feature type="binding site" evidence="1">
    <location>
        <position position="271"/>
    </location>
    <ligand>
        <name>substrate</name>
    </ligand>
</feature>
<feature type="binding site" evidence="1">
    <location>
        <position position="299"/>
    </location>
    <ligand>
        <name>Fe cation</name>
        <dbReference type="ChEBI" id="CHEBI:24875"/>
    </ligand>
</feature>
<protein>
    <recommendedName>
        <fullName evidence="1">tRNA N6-adenosine threonylcarbamoyltransferase</fullName>
        <ecNumber evidence="1">2.3.1.234</ecNumber>
    </recommendedName>
    <alternativeName>
        <fullName evidence="1">N6-L-threonylcarbamoyladenine synthase</fullName>
        <shortName evidence="1">t(6)A synthase</shortName>
    </alternativeName>
    <alternativeName>
        <fullName evidence="1">t(6)A37 threonylcarbamoyladenosine biosynthesis protein TsaD</fullName>
    </alternativeName>
    <alternativeName>
        <fullName evidence="1">tRNA threonylcarbamoyladenosine biosynthesis protein TsaD</fullName>
    </alternativeName>
</protein>
<reference key="1">
    <citation type="journal article" date="2005" name="PLoS Biol.">
        <title>Major structural differences and novel potential virulence mechanisms from the genomes of multiple Campylobacter species.</title>
        <authorList>
            <person name="Fouts D.E."/>
            <person name="Mongodin E.F."/>
            <person name="Mandrell R.E."/>
            <person name="Miller W.G."/>
            <person name="Rasko D.A."/>
            <person name="Ravel J."/>
            <person name="Brinkac L.M."/>
            <person name="DeBoy R.T."/>
            <person name="Parker C.T."/>
            <person name="Daugherty S.C."/>
            <person name="Dodson R.J."/>
            <person name="Durkin A.S."/>
            <person name="Madupu R."/>
            <person name="Sullivan S.A."/>
            <person name="Shetty J.U."/>
            <person name="Ayodeji M.A."/>
            <person name="Shvartsbeyn A."/>
            <person name="Schatz M.C."/>
            <person name="Badger J.H."/>
            <person name="Fraser C.M."/>
            <person name="Nelson K.E."/>
        </authorList>
    </citation>
    <scope>NUCLEOTIDE SEQUENCE [LARGE SCALE GENOMIC DNA]</scope>
    <source>
        <strain>RM1221</strain>
    </source>
</reference>
<keyword id="KW-0012">Acyltransferase</keyword>
<keyword id="KW-0963">Cytoplasm</keyword>
<keyword id="KW-0408">Iron</keyword>
<keyword id="KW-0479">Metal-binding</keyword>
<keyword id="KW-0808">Transferase</keyword>
<keyword id="KW-0819">tRNA processing</keyword>
<accession>Q5HT67</accession>
<comment type="function">
    <text evidence="1">Required for the formation of a threonylcarbamoyl group on adenosine at position 37 (t(6)A37) in tRNAs that read codons beginning with adenine. Is involved in the transfer of the threonylcarbamoyl moiety of threonylcarbamoyl-AMP (TC-AMP) to the N6 group of A37, together with TsaE and TsaB. TsaD likely plays a direct catalytic role in this reaction.</text>
</comment>
<comment type="catalytic activity">
    <reaction evidence="1">
        <text>L-threonylcarbamoyladenylate + adenosine(37) in tRNA = N(6)-L-threonylcarbamoyladenosine(37) in tRNA + AMP + H(+)</text>
        <dbReference type="Rhea" id="RHEA:37059"/>
        <dbReference type="Rhea" id="RHEA-COMP:10162"/>
        <dbReference type="Rhea" id="RHEA-COMP:10163"/>
        <dbReference type="ChEBI" id="CHEBI:15378"/>
        <dbReference type="ChEBI" id="CHEBI:73682"/>
        <dbReference type="ChEBI" id="CHEBI:74411"/>
        <dbReference type="ChEBI" id="CHEBI:74418"/>
        <dbReference type="ChEBI" id="CHEBI:456215"/>
        <dbReference type="EC" id="2.3.1.234"/>
    </reaction>
</comment>
<comment type="cofactor">
    <cofactor evidence="1">
        <name>Fe(2+)</name>
        <dbReference type="ChEBI" id="CHEBI:29033"/>
    </cofactor>
    <text evidence="1">Binds 1 Fe(2+) ion per subunit.</text>
</comment>
<comment type="subcellular location">
    <subcellularLocation>
        <location evidence="1">Cytoplasm</location>
    </subcellularLocation>
</comment>
<comment type="similarity">
    <text evidence="1">Belongs to the KAE1 / TsaD family.</text>
</comment>
<dbReference type="EC" id="2.3.1.234" evidence="1"/>
<dbReference type="EMBL" id="CP000025">
    <property type="protein sequence ID" value="AAW35970.1"/>
    <property type="molecule type" value="Genomic_DNA"/>
</dbReference>
<dbReference type="PIR" id="E81278">
    <property type="entry name" value="E81278"/>
</dbReference>
<dbReference type="RefSeq" id="WP_002864246.1">
    <property type="nucleotide sequence ID" value="NC_003912.7"/>
</dbReference>
<dbReference type="SMR" id="Q5HT67"/>
<dbReference type="KEGG" id="cjr:CJE1533"/>
<dbReference type="HOGENOM" id="CLU_023208_0_3_7"/>
<dbReference type="GO" id="GO:0005737">
    <property type="term" value="C:cytoplasm"/>
    <property type="evidence" value="ECO:0007669"/>
    <property type="project" value="UniProtKB-SubCell"/>
</dbReference>
<dbReference type="GO" id="GO:0005506">
    <property type="term" value="F:iron ion binding"/>
    <property type="evidence" value="ECO:0007669"/>
    <property type="project" value="UniProtKB-UniRule"/>
</dbReference>
<dbReference type="GO" id="GO:0061711">
    <property type="term" value="F:N(6)-L-threonylcarbamoyladenine synthase activity"/>
    <property type="evidence" value="ECO:0007669"/>
    <property type="project" value="UniProtKB-EC"/>
</dbReference>
<dbReference type="GO" id="GO:0002949">
    <property type="term" value="P:tRNA threonylcarbamoyladenosine modification"/>
    <property type="evidence" value="ECO:0007669"/>
    <property type="project" value="UniProtKB-UniRule"/>
</dbReference>
<dbReference type="Gene3D" id="3.30.420.40">
    <property type="match status" value="2"/>
</dbReference>
<dbReference type="HAMAP" id="MF_01445">
    <property type="entry name" value="TsaD"/>
    <property type="match status" value="1"/>
</dbReference>
<dbReference type="InterPro" id="IPR043129">
    <property type="entry name" value="ATPase_NBD"/>
</dbReference>
<dbReference type="InterPro" id="IPR000905">
    <property type="entry name" value="Gcp-like_dom"/>
</dbReference>
<dbReference type="InterPro" id="IPR017861">
    <property type="entry name" value="KAE1/TsaD"/>
</dbReference>
<dbReference type="InterPro" id="IPR017860">
    <property type="entry name" value="Peptidase_M22_CS"/>
</dbReference>
<dbReference type="InterPro" id="IPR022450">
    <property type="entry name" value="TsaD"/>
</dbReference>
<dbReference type="NCBIfam" id="TIGR00329">
    <property type="entry name" value="gcp_kae1"/>
    <property type="match status" value="1"/>
</dbReference>
<dbReference type="NCBIfam" id="TIGR03723">
    <property type="entry name" value="T6A_TsaD_YgjD"/>
    <property type="match status" value="1"/>
</dbReference>
<dbReference type="PANTHER" id="PTHR11735">
    <property type="entry name" value="TRNA N6-ADENOSINE THREONYLCARBAMOYLTRANSFERASE"/>
    <property type="match status" value="1"/>
</dbReference>
<dbReference type="PANTHER" id="PTHR11735:SF6">
    <property type="entry name" value="TRNA N6-ADENOSINE THREONYLCARBAMOYLTRANSFERASE, MITOCHONDRIAL"/>
    <property type="match status" value="1"/>
</dbReference>
<dbReference type="Pfam" id="PF00814">
    <property type="entry name" value="TsaD"/>
    <property type="match status" value="1"/>
</dbReference>
<dbReference type="PRINTS" id="PR00789">
    <property type="entry name" value="OSIALOPTASE"/>
</dbReference>
<dbReference type="SUPFAM" id="SSF53067">
    <property type="entry name" value="Actin-like ATPase domain"/>
    <property type="match status" value="2"/>
</dbReference>
<dbReference type="PROSITE" id="PS01016">
    <property type="entry name" value="GLYCOPROTEASE"/>
    <property type="match status" value="1"/>
</dbReference>
<evidence type="ECO:0000255" key="1">
    <source>
        <dbReference type="HAMAP-Rule" id="MF_01445"/>
    </source>
</evidence>
<name>TSAD_CAMJR</name>
<gene>
    <name evidence="1" type="primary">tsaD</name>
    <name type="synonym">gcp</name>
    <name type="ordered locus">CJE1533</name>
</gene>
<proteinExistence type="inferred from homology"/>